<proteinExistence type="inferred from homology"/>
<feature type="chain" id="PRO_0000183109" description="Crossover junction endodeoxyribonuclease RuvC">
    <location>
        <begin position="1"/>
        <end position="188"/>
    </location>
</feature>
<feature type="active site" evidence="1">
    <location>
        <position position="7"/>
    </location>
</feature>
<feature type="active site" evidence="1">
    <location>
        <position position="68"/>
    </location>
</feature>
<feature type="active site" evidence="1">
    <location>
        <position position="141"/>
    </location>
</feature>
<feature type="binding site" evidence="1">
    <location>
        <position position="7"/>
    </location>
    <ligand>
        <name>Mg(2+)</name>
        <dbReference type="ChEBI" id="CHEBI:18420"/>
        <label>1</label>
    </ligand>
</feature>
<feature type="binding site" evidence="1">
    <location>
        <position position="68"/>
    </location>
    <ligand>
        <name>Mg(2+)</name>
        <dbReference type="ChEBI" id="CHEBI:18420"/>
        <label>2</label>
    </ligand>
</feature>
<feature type="binding site" evidence="1">
    <location>
        <position position="141"/>
    </location>
    <ligand>
        <name>Mg(2+)</name>
        <dbReference type="ChEBI" id="CHEBI:18420"/>
        <label>1</label>
    </ligand>
</feature>
<accession>P40834</accession>
<organism>
    <name type="scientific">Mycobacterium leprae (strain TN)</name>
    <dbReference type="NCBI Taxonomy" id="272631"/>
    <lineage>
        <taxon>Bacteria</taxon>
        <taxon>Bacillati</taxon>
        <taxon>Actinomycetota</taxon>
        <taxon>Actinomycetes</taxon>
        <taxon>Mycobacteriales</taxon>
        <taxon>Mycobacteriaceae</taxon>
        <taxon>Mycobacterium</taxon>
    </lineage>
</organism>
<comment type="function">
    <text evidence="1">The RuvA-RuvB-RuvC complex processes Holliday junction (HJ) DNA during genetic recombination and DNA repair. Endonuclease that resolves HJ intermediates. Cleaves cruciform DNA by making single-stranded nicks across the HJ at symmetrical positions within the homologous arms, yielding a 5'-phosphate and a 3'-hydroxyl group; requires a central core of homology in the junction. The consensus cleavage sequence is 5'-(A/T)TT(C/G)-3'. Cleavage occurs on the 3'-side of the TT dinucleotide at the point of strand exchange. HJ branch migration catalyzed by RuvA-RuvB allows RuvC to scan DNA until it finds its consensus sequence, where it cleaves and resolves the cruciform DNA.</text>
</comment>
<comment type="catalytic activity">
    <reaction evidence="1">
        <text>Endonucleolytic cleavage at a junction such as a reciprocal single-stranded crossover between two homologous DNA duplexes (Holliday junction).</text>
        <dbReference type="EC" id="3.1.21.10"/>
    </reaction>
</comment>
<comment type="cofactor">
    <cofactor evidence="1">
        <name>Mg(2+)</name>
        <dbReference type="ChEBI" id="CHEBI:18420"/>
    </cofactor>
    <text evidence="1">Binds 2 Mg(2+) ion per subunit.</text>
</comment>
<comment type="subunit">
    <text evidence="1">Homodimer which binds Holliday junction (HJ) DNA. The HJ becomes 2-fold symmetrical on binding to RuvC with unstacked arms; it has a different conformation from HJ DNA in complex with RuvA. In the full resolvosome a probable DNA-RuvA(4)-RuvB(12)-RuvC(2) complex forms which resolves the HJ.</text>
</comment>
<comment type="subcellular location">
    <subcellularLocation>
        <location evidence="1">Cytoplasm</location>
    </subcellularLocation>
</comment>
<comment type="similarity">
    <text evidence="1 2">Belongs to the RuvC family.</text>
</comment>
<name>RUVC_MYCLE</name>
<gene>
    <name evidence="1" type="primary">ruvC</name>
    <name type="ordered locus">ML0481</name>
    <name type="ORF">B1177_C3_226</name>
</gene>
<dbReference type="EC" id="3.1.21.10" evidence="1"/>
<dbReference type="EMBL" id="U00011">
    <property type="protein sequence ID" value="AAA17097.1"/>
    <property type="molecule type" value="Genomic_DNA"/>
</dbReference>
<dbReference type="EMBL" id="AL583918">
    <property type="protein sequence ID" value="CAC29989.1"/>
    <property type="molecule type" value="Genomic_DNA"/>
</dbReference>
<dbReference type="PIR" id="S72733">
    <property type="entry name" value="S72733"/>
</dbReference>
<dbReference type="RefSeq" id="NP_301421.1">
    <property type="nucleotide sequence ID" value="NC_002677.1"/>
</dbReference>
<dbReference type="RefSeq" id="WP_010907745.1">
    <property type="nucleotide sequence ID" value="NC_002677.1"/>
</dbReference>
<dbReference type="SMR" id="P40834"/>
<dbReference type="STRING" id="272631.gene:17574302"/>
<dbReference type="KEGG" id="mle:ML0481"/>
<dbReference type="PATRIC" id="fig|272631.5.peg.844"/>
<dbReference type="Leproma" id="ML0481"/>
<dbReference type="eggNOG" id="COG0817">
    <property type="taxonomic scope" value="Bacteria"/>
</dbReference>
<dbReference type="HOGENOM" id="CLU_091257_0_2_11"/>
<dbReference type="OrthoDB" id="9805499at2"/>
<dbReference type="Proteomes" id="UP000000806">
    <property type="component" value="Chromosome"/>
</dbReference>
<dbReference type="GO" id="GO:0005737">
    <property type="term" value="C:cytoplasm"/>
    <property type="evidence" value="ECO:0007669"/>
    <property type="project" value="UniProtKB-SubCell"/>
</dbReference>
<dbReference type="GO" id="GO:0048476">
    <property type="term" value="C:Holliday junction resolvase complex"/>
    <property type="evidence" value="ECO:0007669"/>
    <property type="project" value="UniProtKB-UniRule"/>
</dbReference>
<dbReference type="GO" id="GO:0008821">
    <property type="term" value="F:crossover junction DNA endonuclease activity"/>
    <property type="evidence" value="ECO:0007669"/>
    <property type="project" value="UniProtKB-UniRule"/>
</dbReference>
<dbReference type="GO" id="GO:0003677">
    <property type="term" value="F:DNA binding"/>
    <property type="evidence" value="ECO:0007669"/>
    <property type="project" value="UniProtKB-KW"/>
</dbReference>
<dbReference type="GO" id="GO:0000287">
    <property type="term" value="F:magnesium ion binding"/>
    <property type="evidence" value="ECO:0007669"/>
    <property type="project" value="UniProtKB-UniRule"/>
</dbReference>
<dbReference type="GO" id="GO:0006310">
    <property type="term" value="P:DNA recombination"/>
    <property type="evidence" value="ECO:0007669"/>
    <property type="project" value="UniProtKB-UniRule"/>
</dbReference>
<dbReference type="GO" id="GO:0006281">
    <property type="term" value="P:DNA repair"/>
    <property type="evidence" value="ECO:0007669"/>
    <property type="project" value="UniProtKB-UniRule"/>
</dbReference>
<dbReference type="CDD" id="cd16962">
    <property type="entry name" value="RuvC"/>
    <property type="match status" value="1"/>
</dbReference>
<dbReference type="FunFam" id="3.30.420.10:FF:000002">
    <property type="entry name" value="Crossover junction endodeoxyribonuclease RuvC"/>
    <property type="match status" value="1"/>
</dbReference>
<dbReference type="Gene3D" id="3.30.420.10">
    <property type="entry name" value="Ribonuclease H-like superfamily/Ribonuclease H"/>
    <property type="match status" value="1"/>
</dbReference>
<dbReference type="HAMAP" id="MF_00034">
    <property type="entry name" value="RuvC"/>
    <property type="match status" value="1"/>
</dbReference>
<dbReference type="InterPro" id="IPR012337">
    <property type="entry name" value="RNaseH-like_sf"/>
</dbReference>
<dbReference type="InterPro" id="IPR036397">
    <property type="entry name" value="RNaseH_sf"/>
</dbReference>
<dbReference type="InterPro" id="IPR020563">
    <property type="entry name" value="X-over_junc_endoDNase_Mg_BS"/>
</dbReference>
<dbReference type="InterPro" id="IPR002176">
    <property type="entry name" value="X-over_junc_endoDNase_RuvC"/>
</dbReference>
<dbReference type="NCBIfam" id="TIGR00228">
    <property type="entry name" value="ruvC"/>
    <property type="match status" value="1"/>
</dbReference>
<dbReference type="PANTHER" id="PTHR30194">
    <property type="entry name" value="CROSSOVER JUNCTION ENDODEOXYRIBONUCLEASE RUVC"/>
    <property type="match status" value="1"/>
</dbReference>
<dbReference type="PANTHER" id="PTHR30194:SF3">
    <property type="entry name" value="CROSSOVER JUNCTION ENDODEOXYRIBONUCLEASE RUVC"/>
    <property type="match status" value="1"/>
</dbReference>
<dbReference type="Pfam" id="PF02075">
    <property type="entry name" value="RuvC"/>
    <property type="match status" value="1"/>
</dbReference>
<dbReference type="PRINTS" id="PR00696">
    <property type="entry name" value="RSOLVASERUVC"/>
</dbReference>
<dbReference type="SUPFAM" id="SSF53098">
    <property type="entry name" value="Ribonuclease H-like"/>
    <property type="match status" value="1"/>
</dbReference>
<dbReference type="PROSITE" id="PS01321">
    <property type="entry name" value="RUVC"/>
    <property type="match status" value="1"/>
</dbReference>
<sequence>MRVMGVDPGLTRCGLSVVENGRGSQVVALDVDVVRTPSDAPVSKRLLAVSDVVEHWLDAHHPDVMAIERVFSQQNVSTVMGTAQAGGVIALAAARRGIDVHFHTPSEVKAAVTGNGAANKAQVTAMVTRILALQAKPTPADAADALALAICHCWRAPMIARMAEAEALGARHRQAYRAKVAGEVKATR</sequence>
<protein>
    <recommendedName>
        <fullName evidence="1">Crossover junction endodeoxyribonuclease RuvC</fullName>
        <ecNumber evidence="1">3.1.21.10</ecNumber>
    </recommendedName>
    <alternativeName>
        <fullName evidence="1">Holliday junction nuclease RuvC</fullName>
    </alternativeName>
    <alternativeName>
        <fullName evidence="1">Holliday junction resolvase RuvC</fullName>
    </alternativeName>
</protein>
<reference key="1">
    <citation type="submission" date="1994-03" db="EMBL/GenBank/DDBJ databases">
        <authorList>
            <person name="Smith D.R."/>
            <person name="Robison K."/>
        </authorList>
    </citation>
    <scope>NUCLEOTIDE SEQUENCE [GENOMIC DNA]</scope>
</reference>
<reference key="2">
    <citation type="journal article" date="2001" name="Nature">
        <title>Massive gene decay in the leprosy bacillus.</title>
        <authorList>
            <person name="Cole S.T."/>
            <person name="Eiglmeier K."/>
            <person name="Parkhill J."/>
            <person name="James K.D."/>
            <person name="Thomson N.R."/>
            <person name="Wheeler P.R."/>
            <person name="Honore N."/>
            <person name="Garnier T."/>
            <person name="Churcher C.M."/>
            <person name="Harris D.E."/>
            <person name="Mungall K.L."/>
            <person name="Basham D."/>
            <person name="Brown D."/>
            <person name="Chillingworth T."/>
            <person name="Connor R."/>
            <person name="Davies R.M."/>
            <person name="Devlin K."/>
            <person name="Duthoy S."/>
            <person name="Feltwell T."/>
            <person name="Fraser A."/>
            <person name="Hamlin N."/>
            <person name="Holroyd S."/>
            <person name="Hornsby T."/>
            <person name="Jagels K."/>
            <person name="Lacroix C."/>
            <person name="Maclean J."/>
            <person name="Moule S."/>
            <person name="Murphy L.D."/>
            <person name="Oliver K."/>
            <person name="Quail M.A."/>
            <person name="Rajandream M.A."/>
            <person name="Rutherford K.M."/>
            <person name="Rutter S."/>
            <person name="Seeger K."/>
            <person name="Simon S."/>
            <person name="Simmonds M."/>
            <person name="Skelton J."/>
            <person name="Squares R."/>
            <person name="Squares S."/>
            <person name="Stevens K."/>
            <person name="Taylor K."/>
            <person name="Whitehead S."/>
            <person name="Woodward J.R."/>
            <person name="Barrell B.G."/>
        </authorList>
    </citation>
    <scope>NUCLEOTIDE SEQUENCE [LARGE SCALE GENOMIC DNA]</scope>
    <source>
        <strain>TN</strain>
    </source>
</reference>
<keyword id="KW-0963">Cytoplasm</keyword>
<keyword id="KW-0227">DNA damage</keyword>
<keyword id="KW-0233">DNA recombination</keyword>
<keyword id="KW-0234">DNA repair</keyword>
<keyword id="KW-0238">DNA-binding</keyword>
<keyword id="KW-0255">Endonuclease</keyword>
<keyword id="KW-0378">Hydrolase</keyword>
<keyword id="KW-0460">Magnesium</keyword>
<keyword id="KW-0479">Metal-binding</keyword>
<keyword id="KW-0540">Nuclease</keyword>
<keyword id="KW-1185">Reference proteome</keyword>
<evidence type="ECO:0000255" key="1">
    <source>
        <dbReference type="HAMAP-Rule" id="MF_00034"/>
    </source>
</evidence>
<evidence type="ECO:0000305" key="2"/>